<comment type="function">
    <text evidence="1">Catalyzes the reduction of 2,3-diketo-L-gulonate in the presence of NADH, to form 3-keto-L-gulonate.</text>
</comment>
<comment type="catalytic activity">
    <reaction evidence="1">
        <text>3-dehydro-L-gulonate + NAD(+) = 2,3-dioxo-L-gulonate + NADH + H(+)</text>
        <dbReference type="Rhea" id="RHEA:21924"/>
        <dbReference type="ChEBI" id="CHEBI:15378"/>
        <dbReference type="ChEBI" id="CHEBI:57441"/>
        <dbReference type="ChEBI" id="CHEBI:57540"/>
        <dbReference type="ChEBI" id="CHEBI:57655"/>
        <dbReference type="ChEBI" id="CHEBI:57945"/>
        <dbReference type="EC" id="1.1.1.130"/>
    </reaction>
</comment>
<comment type="catalytic activity">
    <reaction evidence="1">
        <text>3-dehydro-L-gulonate + NADP(+) = 2,3-dioxo-L-gulonate + NADPH + H(+)</text>
        <dbReference type="Rhea" id="RHEA:21928"/>
        <dbReference type="ChEBI" id="CHEBI:15378"/>
        <dbReference type="ChEBI" id="CHEBI:57441"/>
        <dbReference type="ChEBI" id="CHEBI:57655"/>
        <dbReference type="ChEBI" id="CHEBI:57783"/>
        <dbReference type="ChEBI" id="CHEBI:58349"/>
        <dbReference type="EC" id="1.1.1.130"/>
    </reaction>
</comment>
<comment type="subunit">
    <text evidence="1">Homodimer.</text>
</comment>
<comment type="subcellular location">
    <subcellularLocation>
        <location evidence="1">Cytoplasm</location>
    </subcellularLocation>
</comment>
<comment type="similarity">
    <text evidence="1">Belongs to the LDH2/MDH2 oxidoreductase family. DlgD subfamily.</text>
</comment>
<organism>
    <name type="scientific">Escherichia coli (strain SMS-3-5 / SECEC)</name>
    <dbReference type="NCBI Taxonomy" id="439855"/>
    <lineage>
        <taxon>Bacteria</taxon>
        <taxon>Pseudomonadati</taxon>
        <taxon>Pseudomonadota</taxon>
        <taxon>Gammaproteobacteria</taxon>
        <taxon>Enterobacterales</taxon>
        <taxon>Enterobacteriaceae</taxon>
        <taxon>Escherichia</taxon>
    </lineage>
</organism>
<keyword id="KW-0963">Cytoplasm</keyword>
<keyword id="KW-0520">NAD</keyword>
<keyword id="KW-0560">Oxidoreductase</keyword>
<feature type="chain" id="PRO_1000134343" description="2,3-diketo-L-gulonate reductase">
    <location>
        <begin position="1"/>
        <end position="332"/>
    </location>
</feature>
<feature type="active site" description="Proton donor" evidence="1">
    <location>
        <position position="44"/>
    </location>
</feature>
<feature type="binding site" evidence="1">
    <location>
        <begin position="168"/>
        <end position="174"/>
    </location>
    <ligand>
        <name>NAD(+)</name>
        <dbReference type="ChEBI" id="CHEBI:57540"/>
    </ligand>
</feature>
<feature type="binding site" evidence="1">
    <location>
        <begin position="224"/>
        <end position="225"/>
    </location>
    <ligand>
        <name>NAD(+)</name>
        <dbReference type="ChEBI" id="CHEBI:57540"/>
    </ligand>
</feature>
<feature type="binding site" evidence="1">
    <location>
        <begin position="304"/>
        <end position="306"/>
    </location>
    <ligand>
        <name>NAD(+)</name>
        <dbReference type="ChEBI" id="CHEBI:57540"/>
    </ligand>
</feature>
<gene>
    <name evidence="1" type="primary">dlgD</name>
    <name type="ordered locus">EcSMS35_3898</name>
</gene>
<name>DLGD_ECOSM</name>
<reference key="1">
    <citation type="journal article" date="2008" name="J. Bacteriol.">
        <title>Insights into the environmental resistance gene pool from the genome sequence of the multidrug-resistant environmental isolate Escherichia coli SMS-3-5.</title>
        <authorList>
            <person name="Fricke W.F."/>
            <person name="Wright M.S."/>
            <person name="Lindell A.H."/>
            <person name="Harkins D.M."/>
            <person name="Baker-Austin C."/>
            <person name="Ravel J."/>
            <person name="Stepanauskas R."/>
        </authorList>
    </citation>
    <scope>NUCLEOTIDE SEQUENCE [LARGE SCALE GENOMIC DNA]</scope>
    <source>
        <strain>SMS-3-5 / SECEC</strain>
    </source>
</reference>
<dbReference type="EC" id="1.1.1.130" evidence="1"/>
<dbReference type="EMBL" id="CP000970">
    <property type="protein sequence ID" value="ACB16566.1"/>
    <property type="molecule type" value="Genomic_DNA"/>
</dbReference>
<dbReference type="SMR" id="B1LJD7"/>
<dbReference type="KEGG" id="ecm:EcSMS35_3898"/>
<dbReference type="HOGENOM" id="CLU_040452_4_0_6"/>
<dbReference type="Proteomes" id="UP000007011">
    <property type="component" value="Chromosome"/>
</dbReference>
<dbReference type="GO" id="GO:0005737">
    <property type="term" value="C:cytoplasm"/>
    <property type="evidence" value="ECO:0007669"/>
    <property type="project" value="UniProtKB-SubCell"/>
</dbReference>
<dbReference type="GO" id="GO:0047559">
    <property type="term" value="F:3-dehydro-L-gulonate 2-dehydrogenase activity"/>
    <property type="evidence" value="ECO:0007669"/>
    <property type="project" value="UniProtKB-UniRule"/>
</dbReference>
<dbReference type="GO" id="GO:0070403">
    <property type="term" value="F:NAD+ binding"/>
    <property type="evidence" value="ECO:0007669"/>
    <property type="project" value="InterPro"/>
</dbReference>
<dbReference type="FunFam" id="1.10.1530.10:FF:000001">
    <property type="entry name" value="2,3-diketo-L-gulonate reductase"/>
    <property type="match status" value="1"/>
</dbReference>
<dbReference type="Gene3D" id="1.10.1530.10">
    <property type="match status" value="1"/>
</dbReference>
<dbReference type="Gene3D" id="3.30.1370.60">
    <property type="entry name" value="Hypothetical oxidoreductase yiak, domain 2"/>
    <property type="match status" value="1"/>
</dbReference>
<dbReference type="Gene3D" id="3.30.60.50">
    <property type="entry name" value="Hypothetical oxidoreductase yiak, domain 3"/>
    <property type="match status" value="1"/>
</dbReference>
<dbReference type="HAMAP" id="MF_00820">
    <property type="entry name" value="Diketo_gul_reduc"/>
    <property type="match status" value="1"/>
</dbReference>
<dbReference type="InterPro" id="IPR023689">
    <property type="entry name" value="Diketo_gul_Rdtase"/>
</dbReference>
<dbReference type="InterPro" id="IPR043144">
    <property type="entry name" value="Mal/L-sulf/L-lact_DH-like_ah"/>
</dbReference>
<dbReference type="InterPro" id="IPR043143">
    <property type="entry name" value="Mal/L-sulf/L-lact_DH-like_NADP"/>
</dbReference>
<dbReference type="InterPro" id="IPR036111">
    <property type="entry name" value="Mal/L-sulfo/L-lacto_DH-like_sf"/>
</dbReference>
<dbReference type="InterPro" id="IPR003767">
    <property type="entry name" value="Malate/L-lactate_DH-like"/>
</dbReference>
<dbReference type="NCBIfam" id="NF009750">
    <property type="entry name" value="PRK13260.1"/>
    <property type="match status" value="1"/>
</dbReference>
<dbReference type="PANTHER" id="PTHR11091:SF3">
    <property type="entry name" value="2,3-DIKETO-L-GULONATE REDUCTASE"/>
    <property type="match status" value="1"/>
</dbReference>
<dbReference type="PANTHER" id="PTHR11091">
    <property type="entry name" value="OXIDOREDUCTASE-RELATED"/>
    <property type="match status" value="1"/>
</dbReference>
<dbReference type="Pfam" id="PF02615">
    <property type="entry name" value="Ldh_2"/>
    <property type="match status" value="1"/>
</dbReference>
<dbReference type="SUPFAM" id="SSF89733">
    <property type="entry name" value="L-sulfolactate dehydrogenase-like"/>
    <property type="match status" value="1"/>
</dbReference>
<protein>
    <recommendedName>
        <fullName evidence="1">2,3-diketo-L-gulonate reductase</fullName>
        <shortName evidence="1">2,3-DKG reductase</shortName>
        <ecNumber evidence="1">1.1.1.130</ecNumber>
    </recommendedName>
    <alternativeName>
        <fullName evidence="1">3-dehydro-L-gulonate 2-dehydrogenase</fullName>
    </alternativeName>
</protein>
<sequence length="332" mass="36573">MKVTFEQLKAAFNRVLISRGVDSETADACAEMFARTTESGVYSHGVNRFPRFIQQLENGDIIPDAQPKRITSLGAIEQWDAQRSIGNLTAKKMMDRAIELAADHGIGLVALRNANHWMRGGSYGWQAAEKGYIGICWTNSIAVMPPWGAKECRIGTNPLIVAIPSTPITMVDMSMSMFSYGMLEVNRLAGRQLPVDGGFDDEGNLTKEPGVIEKNRRILPMGYWKGSGMSIVLDMIATLLSDGASVAEVTQDNSDEYGVSQIFIAIEVDKLIDGPTRDAKLQRIMDYVTTAERADENQAIRLPGHEFTTLLAENRRNGITVDDSVWAKIQAL</sequence>
<evidence type="ECO:0000255" key="1">
    <source>
        <dbReference type="HAMAP-Rule" id="MF_00820"/>
    </source>
</evidence>
<proteinExistence type="inferred from homology"/>
<accession>B1LJD7</accession>